<accession>Q6G7T7</accession>
<feature type="signal peptide" evidence="1">
    <location>
        <begin position="1"/>
        <end position="27"/>
    </location>
</feature>
<feature type="chain" id="PRO_0000298642" description="Uncharacterized leukocidin-like protein 2">
    <location>
        <begin position="28"/>
        <end position="350"/>
    </location>
</feature>
<feature type="region of interest" description="Disordered" evidence="2">
    <location>
        <begin position="28"/>
        <end position="71"/>
    </location>
</feature>
<feature type="compositionally biased region" description="Basic and acidic residues" evidence="2">
    <location>
        <begin position="30"/>
        <end position="60"/>
    </location>
</feature>
<sequence length="350" mass="40318">MKNKKRVLIASSLSCAILLLSAATTQANSAHKDSQDQNKKEHVDKSQQKEKRNVTNKDKNSTVPDDIGKNGKITKRTETVYDEKTNILQNLQFDFIDDPTYDKNVLLVKKQGSIHSNLKFESHKEEKNSNWLKYPSEYHVDFQVKRNPKTEILDQLPKNKISTAKVDSTFSYSSGGKFDSTKGIGRTSSNSYSKTISYNQQNYDTIASGKNNNWHVHWSVIANDLKYGGEVKNRNDELLFYRNTRIATVENPELSFASKYRYPALVRSGFNPEFLTYLSNEKSNEKTQFEVTYTRNQDILKNRPGIHYAPPILEKNKEGQRLIVTYEVDWKNKTVKVVDKYSDNKSFREG</sequence>
<gene>
    <name type="ordered locus">SAS1925</name>
</gene>
<organism>
    <name type="scientific">Staphylococcus aureus (strain MSSA476)</name>
    <dbReference type="NCBI Taxonomy" id="282459"/>
    <lineage>
        <taxon>Bacteria</taxon>
        <taxon>Bacillati</taxon>
        <taxon>Bacillota</taxon>
        <taxon>Bacilli</taxon>
        <taxon>Bacillales</taxon>
        <taxon>Staphylococcaceae</taxon>
        <taxon>Staphylococcus</taxon>
    </lineage>
</organism>
<protein>
    <recommendedName>
        <fullName>Uncharacterized leukocidin-like protein 2</fullName>
    </recommendedName>
</protein>
<proteinExistence type="inferred from homology"/>
<name>LUKL2_STAAS</name>
<dbReference type="EMBL" id="BX571857">
    <property type="protein sequence ID" value="CAG43731.1"/>
    <property type="molecule type" value="Genomic_DNA"/>
</dbReference>
<dbReference type="SMR" id="Q6G7T7"/>
<dbReference type="KEGG" id="sas:SAS1925"/>
<dbReference type="HOGENOM" id="CLU_865755_0_0_9"/>
<dbReference type="GO" id="GO:0005576">
    <property type="term" value="C:extracellular region"/>
    <property type="evidence" value="ECO:0007669"/>
    <property type="project" value="InterPro"/>
</dbReference>
<dbReference type="GO" id="GO:0051715">
    <property type="term" value="P:cytolysis in another organism"/>
    <property type="evidence" value="ECO:0007669"/>
    <property type="project" value="InterPro"/>
</dbReference>
<dbReference type="Gene3D" id="2.70.240.10">
    <property type="entry name" value="Leukocidin/porin MspA"/>
    <property type="match status" value="1"/>
</dbReference>
<dbReference type="InterPro" id="IPR003963">
    <property type="entry name" value="Bi-component_toxin_staph"/>
</dbReference>
<dbReference type="InterPro" id="IPR016183">
    <property type="entry name" value="Leukocidin/Hemolysin_toxin"/>
</dbReference>
<dbReference type="InterPro" id="IPR036435">
    <property type="entry name" value="Leukocidin/porin_MspA_sf"/>
</dbReference>
<dbReference type="Pfam" id="PF07968">
    <property type="entry name" value="Leukocidin"/>
    <property type="match status" value="1"/>
</dbReference>
<dbReference type="PRINTS" id="PR01468">
    <property type="entry name" value="BICOMPNTOXIN"/>
</dbReference>
<dbReference type="SUPFAM" id="SSF56959">
    <property type="entry name" value="Leukocidin-like"/>
    <property type="match status" value="1"/>
</dbReference>
<reference key="1">
    <citation type="journal article" date="2004" name="Proc. Natl. Acad. Sci. U.S.A.">
        <title>Complete genomes of two clinical Staphylococcus aureus strains: evidence for the rapid evolution of virulence and drug resistance.</title>
        <authorList>
            <person name="Holden M.T.G."/>
            <person name="Feil E.J."/>
            <person name="Lindsay J.A."/>
            <person name="Peacock S.J."/>
            <person name="Day N.P.J."/>
            <person name="Enright M.C."/>
            <person name="Foster T.J."/>
            <person name="Moore C.E."/>
            <person name="Hurst L."/>
            <person name="Atkin R."/>
            <person name="Barron A."/>
            <person name="Bason N."/>
            <person name="Bentley S.D."/>
            <person name="Chillingworth C."/>
            <person name="Chillingworth T."/>
            <person name="Churcher C."/>
            <person name="Clark L."/>
            <person name="Corton C."/>
            <person name="Cronin A."/>
            <person name="Doggett J."/>
            <person name="Dowd L."/>
            <person name="Feltwell T."/>
            <person name="Hance Z."/>
            <person name="Harris B."/>
            <person name="Hauser H."/>
            <person name="Holroyd S."/>
            <person name="Jagels K."/>
            <person name="James K.D."/>
            <person name="Lennard N."/>
            <person name="Line A."/>
            <person name="Mayes R."/>
            <person name="Moule S."/>
            <person name="Mungall K."/>
            <person name="Ormond D."/>
            <person name="Quail M.A."/>
            <person name="Rabbinowitsch E."/>
            <person name="Rutherford K.M."/>
            <person name="Sanders M."/>
            <person name="Sharp S."/>
            <person name="Simmonds M."/>
            <person name="Stevens K."/>
            <person name="Whitehead S."/>
            <person name="Barrell B.G."/>
            <person name="Spratt B.G."/>
            <person name="Parkhill J."/>
        </authorList>
    </citation>
    <scope>NUCLEOTIDE SEQUENCE [LARGE SCALE GENOMIC DNA]</scope>
    <source>
        <strain>MSSA476</strain>
    </source>
</reference>
<keyword id="KW-0732">Signal</keyword>
<comment type="similarity">
    <text evidence="3">Belongs to the aerolysin family.</text>
</comment>
<evidence type="ECO:0000255" key="1"/>
<evidence type="ECO:0000256" key="2">
    <source>
        <dbReference type="SAM" id="MobiDB-lite"/>
    </source>
</evidence>
<evidence type="ECO:0000305" key="3"/>